<sequence>MATDRLTRVHSLRERLDETLSANRNEILALLSRIEGKGKGILQHHQVIAEFEEIPEESRQKLTDGAFGEVLRSTQEAIVLPPWVALAVRPRPGVWEYLRVNVHALVVEVLQPAEYLRFKEELVDGSSNGNFVLELDFEPFTASFPRPTLNKSIGNGVQFLNRHLSAKLFHDKESLHPLLEFLRLHSVKGKTLMLNDRIQNPDALQHVLRKAEEYLGTVPPETPYSAFEHKFQEIGLERGWGDNAERVLESIQLLLDLLEAPDPCTLETFLGRIPMVFNVVILSPHGYFAQDNVLGYPDTGGQVVYILDQVRALENEMLHRIKQQGLDIVPRILIITRLLPDAVGTTCGQRLEKVFGTEHSHILRVPFRTENGIVRKWISRFEVWPYLETYTEDVAHELAKELQGKPDLIVGNYSDGNIVASLLAHKLGVTQCTIAHALEKTKYPESDIYWKKLEERYHFSCQFTADLFAMNHTDFIITSTFQEIAGSKDTVGQYESHTAFTLPGLYRVVHGIDVFDPKFNIVSPGADQTIYFPHTETSRRLTSFHTEIEELLYSSVENEEHICVLKDRSKPIIFTMARLDRVKNITGLVEWYGKNAKLRELVNLVVVAGDRRKESKDLEEKAEMKKMYSLIETYKLNGQFRWISSQMNRVRNGELYRVIADTKGAFVQPAVYEAFGLTVVEAMTCGLPTFATCNGGPAEIIVHGKSGFHIDPYHGDRAADLLVEFFEKVKVDPSHWDKISQAGLQRIEEKYTWQIYSQRLLTLTGVYGFWKHVSNLDRRESRRYLEMFYALKYRKLAESVPLAVE</sequence>
<organism>
    <name type="scientific">Vigna radiata var. radiata</name>
    <name type="common">Mung bean</name>
    <name type="synonym">Phaseolus aureus</name>
    <dbReference type="NCBI Taxonomy" id="3916"/>
    <lineage>
        <taxon>Eukaryota</taxon>
        <taxon>Viridiplantae</taxon>
        <taxon>Streptophyta</taxon>
        <taxon>Embryophyta</taxon>
        <taxon>Tracheophyta</taxon>
        <taxon>Spermatophyta</taxon>
        <taxon>Magnoliopsida</taxon>
        <taxon>eudicotyledons</taxon>
        <taxon>Gunneridae</taxon>
        <taxon>Pentapetalae</taxon>
        <taxon>rosids</taxon>
        <taxon>fabids</taxon>
        <taxon>Fabales</taxon>
        <taxon>Fabaceae</taxon>
        <taxon>Papilionoideae</taxon>
        <taxon>50 kb inversion clade</taxon>
        <taxon>NPAAA clade</taxon>
        <taxon>indigoferoid/millettioid clade</taxon>
        <taxon>Phaseoleae</taxon>
        <taxon>Vigna</taxon>
    </lineage>
</organism>
<feature type="chain" id="PRO_0000204659" description="Sucrose synthase">
    <location>
        <begin position="1"/>
        <end position="805"/>
    </location>
</feature>
<feature type="region of interest" description="GT-B glycosyltransferase" evidence="1">
    <location>
        <begin position="275"/>
        <end position="752"/>
    </location>
</feature>
<accession>Q01390</accession>
<comment type="function">
    <text>Sucrose-cleaving enzyme that provides UDP-glucose and fructose for various metabolic pathways.</text>
</comment>
<comment type="catalytic activity">
    <reaction>
        <text>an NDP-alpha-D-glucose + D-fructose = a ribonucleoside 5'-diphosphate + sucrose + H(+)</text>
        <dbReference type="Rhea" id="RHEA:16241"/>
        <dbReference type="ChEBI" id="CHEBI:15378"/>
        <dbReference type="ChEBI" id="CHEBI:17992"/>
        <dbReference type="ChEBI" id="CHEBI:37721"/>
        <dbReference type="ChEBI" id="CHEBI:57930"/>
        <dbReference type="ChEBI" id="CHEBI:76533"/>
        <dbReference type="EC" id="2.4.1.13"/>
    </reaction>
</comment>
<comment type="similarity">
    <text evidence="2">Belongs to the glycosyltransferase 1 family. Plant sucrose synthase subfamily.</text>
</comment>
<keyword id="KW-0903">Direct protein sequencing</keyword>
<keyword id="KW-0328">Glycosyltransferase</keyword>
<keyword id="KW-1185">Reference proteome</keyword>
<keyword id="KW-0808">Transferase</keyword>
<gene>
    <name type="primary">SS1</name>
</gene>
<dbReference type="EC" id="2.4.1.13"/>
<dbReference type="EMBL" id="D10266">
    <property type="protein sequence ID" value="BAA01108.1"/>
    <property type="molecule type" value="mRNA"/>
</dbReference>
<dbReference type="RefSeq" id="NP_001304081.1">
    <property type="nucleotide sequence ID" value="NM_001317152.1"/>
</dbReference>
<dbReference type="SMR" id="Q01390"/>
<dbReference type="STRING" id="3916.Q01390"/>
<dbReference type="CAZy" id="GT4">
    <property type="family name" value="Glycosyltransferase Family 4"/>
</dbReference>
<dbReference type="GeneID" id="106768289"/>
<dbReference type="KEGG" id="vra:106768289"/>
<dbReference type="OrthoDB" id="937291at2759"/>
<dbReference type="BRENDA" id="2.4.1.13">
    <property type="organism ID" value="4745"/>
</dbReference>
<dbReference type="SABIO-RK" id="Q01390"/>
<dbReference type="Proteomes" id="UP000087766">
    <property type="component" value="Chromosome 7"/>
</dbReference>
<dbReference type="GO" id="GO:0016157">
    <property type="term" value="F:sucrose synthase activity"/>
    <property type="evidence" value="ECO:0007669"/>
    <property type="project" value="UniProtKB-EC"/>
</dbReference>
<dbReference type="GO" id="GO:0005985">
    <property type="term" value="P:sucrose metabolic process"/>
    <property type="evidence" value="ECO:0007669"/>
    <property type="project" value="InterPro"/>
</dbReference>
<dbReference type="FunFam" id="1.20.120.1230:FF:000001">
    <property type="entry name" value="Sucrose synthase"/>
    <property type="match status" value="1"/>
</dbReference>
<dbReference type="FunFam" id="3.10.450.330:FF:000001">
    <property type="entry name" value="Sucrose synthase"/>
    <property type="match status" value="1"/>
</dbReference>
<dbReference type="FunFam" id="3.40.50.2000:FF:000004">
    <property type="entry name" value="Sucrose synthase"/>
    <property type="match status" value="1"/>
</dbReference>
<dbReference type="Gene3D" id="1.20.120.1230">
    <property type="match status" value="1"/>
</dbReference>
<dbReference type="Gene3D" id="3.10.450.330">
    <property type="match status" value="1"/>
</dbReference>
<dbReference type="Gene3D" id="3.40.50.2000">
    <property type="entry name" value="Glycogen Phosphorylase B"/>
    <property type="match status" value="2"/>
</dbReference>
<dbReference type="InterPro" id="IPR001296">
    <property type="entry name" value="Glyco_trans_1"/>
</dbReference>
<dbReference type="InterPro" id="IPR000368">
    <property type="entry name" value="Sucrose_synth_GT-B1"/>
</dbReference>
<dbReference type="InterPro" id="IPR012820">
    <property type="entry name" value="Sucrose_synthase_pln/cyn"/>
</dbReference>
<dbReference type="InterPro" id="IPR056736">
    <property type="entry name" value="SUS_EPBD"/>
</dbReference>
<dbReference type="InterPro" id="IPR056735">
    <property type="entry name" value="SUS_N"/>
</dbReference>
<dbReference type="NCBIfam" id="TIGR02470">
    <property type="entry name" value="sucr_synth"/>
    <property type="match status" value="1"/>
</dbReference>
<dbReference type="PANTHER" id="PTHR45839">
    <property type="match status" value="1"/>
</dbReference>
<dbReference type="PANTHER" id="PTHR45839:SF31">
    <property type="entry name" value="SUCROSE SYNTHASE"/>
    <property type="match status" value="1"/>
</dbReference>
<dbReference type="Pfam" id="PF00534">
    <property type="entry name" value="Glycos_transf_1"/>
    <property type="match status" value="1"/>
</dbReference>
<dbReference type="Pfam" id="PF00862">
    <property type="entry name" value="GT-B_Sucrose_synth"/>
    <property type="match status" value="1"/>
</dbReference>
<dbReference type="Pfam" id="PF24862">
    <property type="entry name" value="SUS_EPBD"/>
    <property type="match status" value="1"/>
</dbReference>
<dbReference type="Pfam" id="PF24861">
    <property type="entry name" value="SUS_N"/>
    <property type="match status" value="1"/>
</dbReference>
<dbReference type="SUPFAM" id="SSF53756">
    <property type="entry name" value="UDP-Glycosyltransferase/glycogen phosphorylase"/>
    <property type="match status" value="1"/>
</dbReference>
<reference key="1">
    <citation type="journal article" date="1992" name="Plant Cell Physiol.">
        <title>Expression of the gene for sucrose synthase during growth of mung bean seedlings.</title>
        <authorList>
            <person name="Arai M."/>
            <person name="Mori H."/>
            <person name="Imaseki H."/>
        </authorList>
    </citation>
    <scope>NUCLEOTIDE SEQUENCE [MRNA]</scope>
    <scope>PROTEIN SEQUENCE OF 517-537</scope>
</reference>
<proteinExistence type="evidence at protein level"/>
<evidence type="ECO:0000250" key="1">
    <source>
        <dbReference type="UniProtKB" id="P49040"/>
    </source>
</evidence>
<evidence type="ECO:0000305" key="2"/>
<name>SUS_VIGRR</name>
<protein>
    <recommendedName>
        <fullName>Sucrose synthase</fullName>
        <ecNumber>2.4.1.13</ecNumber>
    </recommendedName>
    <alternativeName>
        <fullName>Sucrose-UDP glucosyltransferase</fullName>
    </alternativeName>
</protein>